<gene>
    <name type="primary">aroQ</name>
</gene>
<evidence type="ECO:0000250" key="1"/>
<evidence type="ECO:0000269" key="2">
    <source>
    </source>
</evidence>
<evidence type="ECO:0000305" key="3"/>
<evidence type="ECO:0007829" key="4">
    <source>
        <dbReference type="PDB" id="1UQR"/>
    </source>
</evidence>
<reference key="1">
    <citation type="journal article" date="1994" name="Mol. Microbiol.">
        <title>Characterization of a 3-dehydroquinase gene from Actinobacillus pleuropneumoniae with homology to the eukaryotic genes qa-2 and QUTE.</title>
        <authorList>
            <person name="Lalonde G."/>
            <person name="O'Hanley P.D."/>
            <person name="Stocker B.A.D."/>
            <person name="Denich K.T."/>
        </authorList>
    </citation>
    <scope>NUCLEOTIDE SEQUENCE [GENOMIC DNA]</scope>
    <source>
        <strain>ATCC 27088 / DSM 13472 / CCM 5869 / S4074 / Serotype 1</strain>
    </source>
</reference>
<reference key="2">
    <citation type="journal article" date="2004" name="Acta Crystallogr. D">
        <title>Structural study of the type II 3-dehydroquinate dehydratase from Actinobacillus pleuropneumoniae.</title>
        <authorList>
            <person name="Maes D."/>
            <person name="Gonzalez-Ramirez L.A."/>
            <person name="Lopez-Jaramillo J."/>
            <person name="Yu B."/>
            <person name="De Bondt H."/>
            <person name="Zegers I."/>
            <person name="Afonina E."/>
            <person name="Garcia-Ruiz J.M."/>
            <person name="Gulnik S."/>
        </authorList>
    </citation>
    <scope>X-RAY CRYSTALLOGRAPHY (1.7 ANGSTROMS)</scope>
    <scope>SUBUNIT</scope>
</reference>
<feature type="chain" id="PRO_0000159862" description="3-dehydroquinate dehydratase">
    <location>
        <begin position="1"/>
        <end position="154"/>
    </location>
</feature>
<feature type="active site" description="Proton acceptor" evidence="1">
    <location>
        <position position="23"/>
    </location>
</feature>
<feature type="active site" description="Proton donor" evidence="1">
    <location>
        <position position="100"/>
    </location>
</feature>
<feature type="binding site" evidence="1">
    <location>
        <position position="74"/>
    </location>
    <ligand>
        <name>substrate</name>
    </ligand>
</feature>
<feature type="binding site" evidence="1">
    <location>
        <position position="80"/>
    </location>
    <ligand>
        <name>substrate</name>
    </ligand>
</feature>
<feature type="binding site" evidence="1">
    <location>
        <position position="87"/>
    </location>
    <ligand>
        <name>substrate</name>
    </ligand>
</feature>
<feature type="binding site" evidence="1">
    <location>
        <begin position="101"/>
        <end position="102"/>
    </location>
    <ligand>
        <name>substrate</name>
    </ligand>
</feature>
<feature type="binding site" evidence="1">
    <location>
        <position position="111"/>
    </location>
    <ligand>
        <name>substrate</name>
    </ligand>
</feature>
<feature type="site" description="Transition state stabilizer" evidence="1">
    <location>
        <position position="18"/>
    </location>
</feature>
<feature type="strand" evidence="4">
    <location>
        <begin position="3"/>
        <end position="8"/>
    </location>
</feature>
<feature type="helix" evidence="4">
    <location>
        <begin position="12"/>
        <end position="14"/>
    </location>
</feature>
<feature type="helix" evidence="4">
    <location>
        <begin position="20"/>
        <end position="22"/>
    </location>
</feature>
<feature type="helix" evidence="4">
    <location>
        <begin position="28"/>
        <end position="41"/>
    </location>
</feature>
<feature type="strand" evidence="4">
    <location>
        <begin position="45"/>
        <end position="50"/>
    </location>
</feature>
<feature type="helix" evidence="4">
    <location>
        <begin position="54"/>
        <end position="63"/>
    </location>
</feature>
<feature type="turn" evidence="4">
    <location>
        <begin position="64"/>
        <end position="67"/>
    </location>
</feature>
<feature type="strand" evidence="4">
    <location>
        <begin position="70"/>
        <end position="74"/>
    </location>
</feature>
<feature type="helix" evidence="4">
    <location>
        <begin position="78"/>
        <end position="81"/>
    </location>
</feature>
<feature type="helix" evidence="4">
    <location>
        <begin position="83"/>
        <end position="92"/>
    </location>
</feature>
<feature type="strand" evidence="4">
    <location>
        <begin position="96"/>
        <end position="102"/>
    </location>
</feature>
<feature type="helix" evidence="4">
    <location>
        <begin position="104"/>
        <end position="106"/>
    </location>
</feature>
<feature type="helix" evidence="4">
    <location>
        <begin position="109"/>
        <end position="111"/>
    </location>
</feature>
<feature type="helix" evidence="4">
    <location>
        <begin position="117"/>
        <end position="119"/>
    </location>
</feature>
<feature type="strand" evidence="4">
    <location>
        <begin position="120"/>
        <end position="127"/>
    </location>
</feature>
<feature type="helix" evidence="4">
    <location>
        <begin position="130"/>
        <end position="144"/>
    </location>
</feature>
<feature type="helix" evidence="4">
    <location>
        <begin position="147"/>
        <end position="151"/>
    </location>
</feature>
<proteinExistence type="evidence at protein level"/>
<name>AROQ_ACTPL</name>
<accession>P43877</accession>
<keyword id="KW-0002">3D-structure</keyword>
<keyword id="KW-0028">Amino-acid biosynthesis</keyword>
<keyword id="KW-0057">Aromatic amino acid biosynthesis</keyword>
<keyword id="KW-0456">Lyase</keyword>
<organism>
    <name type="scientific">Actinobacillus pleuropneumoniae</name>
    <name type="common">Haemophilus pleuropneumoniae</name>
    <dbReference type="NCBI Taxonomy" id="715"/>
    <lineage>
        <taxon>Bacteria</taxon>
        <taxon>Pseudomonadati</taxon>
        <taxon>Pseudomonadota</taxon>
        <taxon>Gammaproteobacteria</taxon>
        <taxon>Pasteurellales</taxon>
        <taxon>Pasteurellaceae</taxon>
        <taxon>Actinobacillus</taxon>
    </lineage>
</organism>
<protein>
    <recommendedName>
        <fullName>3-dehydroquinate dehydratase</fullName>
        <shortName>3-dehydroquinase</shortName>
        <ecNumber>4.2.1.10</ecNumber>
    </recommendedName>
    <alternativeName>
        <fullName>Type II DHQase</fullName>
    </alternativeName>
</protein>
<dbReference type="EC" id="4.2.1.10"/>
<dbReference type="EMBL" id="L19895">
    <property type="protein sequence ID" value="AAA72027.1"/>
    <property type="molecule type" value="Genomic_DNA"/>
</dbReference>
<dbReference type="PIR" id="S41538">
    <property type="entry name" value="S41538"/>
</dbReference>
<dbReference type="RefSeq" id="WP_005599518.1">
    <property type="nucleotide sequence ID" value="NZ_UIFY01000002.1"/>
</dbReference>
<dbReference type="PDB" id="1UQR">
    <property type="method" value="X-ray"/>
    <property type="resolution" value="1.70 A"/>
    <property type="chains" value="A/B/C/D/E/F/G/H/I/J/K/L=1-154"/>
</dbReference>
<dbReference type="PDBsum" id="1UQR"/>
<dbReference type="SMR" id="P43877"/>
<dbReference type="GeneID" id="48600167"/>
<dbReference type="OMA" id="AYTHYSY"/>
<dbReference type="OrthoDB" id="9790793at2"/>
<dbReference type="UniPathway" id="UPA00053">
    <property type="reaction ID" value="UER00086"/>
</dbReference>
<dbReference type="EvolutionaryTrace" id="P43877"/>
<dbReference type="GO" id="GO:0003855">
    <property type="term" value="F:3-dehydroquinate dehydratase activity"/>
    <property type="evidence" value="ECO:0007669"/>
    <property type="project" value="UniProtKB-UniRule"/>
</dbReference>
<dbReference type="GO" id="GO:0008652">
    <property type="term" value="P:amino acid biosynthetic process"/>
    <property type="evidence" value="ECO:0007669"/>
    <property type="project" value="UniProtKB-KW"/>
</dbReference>
<dbReference type="GO" id="GO:0009073">
    <property type="term" value="P:aromatic amino acid family biosynthetic process"/>
    <property type="evidence" value="ECO:0007669"/>
    <property type="project" value="UniProtKB-KW"/>
</dbReference>
<dbReference type="GO" id="GO:0009423">
    <property type="term" value="P:chorismate biosynthetic process"/>
    <property type="evidence" value="ECO:0007669"/>
    <property type="project" value="UniProtKB-UniRule"/>
</dbReference>
<dbReference type="GO" id="GO:0019631">
    <property type="term" value="P:quinate catabolic process"/>
    <property type="evidence" value="ECO:0007669"/>
    <property type="project" value="TreeGrafter"/>
</dbReference>
<dbReference type="CDD" id="cd00466">
    <property type="entry name" value="DHQase_II"/>
    <property type="match status" value="1"/>
</dbReference>
<dbReference type="Gene3D" id="3.40.50.9100">
    <property type="entry name" value="Dehydroquinase, class II"/>
    <property type="match status" value="1"/>
</dbReference>
<dbReference type="HAMAP" id="MF_00169">
    <property type="entry name" value="AroQ"/>
    <property type="match status" value="1"/>
</dbReference>
<dbReference type="InterPro" id="IPR001874">
    <property type="entry name" value="DHquinase_II"/>
</dbReference>
<dbReference type="InterPro" id="IPR018509">
    <property type="entry name" value="DHquinase_II_CS"/>
</dbReference>
<dbReference type="InterPro" id="IPR036441">
    <property type="entry name" value="DHquinase_II_sf"/>
</dbReference>
<dbReference type="NCBIfam" id="TIGR01088">
    <property type="entry name" value="aroQ"/>
    <property type="match status" value="1"/>
</dbReference>
<dbReference type="NCBIfam" id="NF003804">
    <property type="entry name" value="PRK05395.1-1"/>
    <property type="match status" value="1"/>
</dbReference>
<dbReference type="NCBIfam" id="NF003805">
    <property type="entry name" value="PRK05395.1-2"/>
    <property type="match status" value="1"/>
</dbReference>
<dbReference type="NCBIfam" id="NF003806">
    <property type="entry name" value="PRK05395.1-3"/>
    <property type="match status" value="1"/>
</dbReference>
<dbReference type="NCBIfam" id="NF003807">
    <property type="entry name" value="PRK05395.1-4"/>
    <property type="match status" value="1"/>
</dbReference>
<dbReference type="PANTHER" id="PTHR21272">
    <property type="entry name" value="CATABOLIC 3-DEHYDROQUINASE"/>
    <property type="match status" value="1"/>
</dbReference>
<dbReference type="PANTHER" id="PTHR21272:SF3">
    <property type="entry name" value="CATABOLIC 3-DEHYDROQUINASE"/>
    <property type="match status" value="1"/>
</dbReference>
<dbReference type="Pfam" id="PF01220">
    <property type="entry name" value="DHquinase_II"/>
    <property type="match status" value="1"/>
</dbReference>
<dbReference type="PIRSF" id="PIRSF001399">
    <property type="entry name" value="DHquinase_II"/>
    <property type="match status" value="1"/>
</dbReference>
<dbReference type="SUPFAM" id="SSF52304">
    <property type="entry name" value="Type II 3-dehydroquinate dehydratase"/>
    <property type="match status" value="1"/>
</dbReference>
<dbReference type="PROSITE" id="PS01029">
    <property type="entry name" value="DEHYDROQUINASE_II"/>
    <property type="match status" value="1"/>
</dbReference>
<sequence>MKKILLLNGPNLNMLGKREPHIYGSQTLSDIEQHLQQSAQAQGYELDYFQANGEESLINRIHQAFQNTDFIIINPGAFTHTSVAIRDALLAVSIPFIEVHLSNVHAREPFRHHSYLSDVAKGVICGLGAKGYDYALDFAISELQKIQLGEMMNG</sequence>
<comment type="function">
    <text evidence="1">Catalyzes a trans-dehydration via an enolate intermediate.</text>
</comment>
<comment type="catalytic activity">
    <reaction>
        <text>3-dehydroquinate = 3-dehydroshikimate + H2O</text>
        <dbReference type="Rhea" id="RHEA:21096"/>
        <dbReference type="ChEBI" id="CHEBI:15377"/>
        <dbReference type="ChEBI" id="CHEBI:16630"/>
        <dbReference type="ChEBI" id="CHEBI:32364"/>
        <dbReference type="EC" id="4.2.1.10"/>
    </reaction>
</comment>
<comment type="pathway">
    <text>Metabolic intermediate biosynthesis; chorismate biosynthesis; chorismate from D-erythrose 4-phosphate and phosphoenolpyruvate: step 3/7.</text>
</comment>
<comment type="subunit">
    <text evidence="2">Homododecamer.</text>
</comment>
<comment type="similarity">
    <text evidence="3">Belongs to the type-II 3-dehydroquinase family.</text>
</comment>